<dbReference type="EC" id="3.7.1.3" evidence="1"/>
<dbReference type="EMBL" id="CH408030">
    <property type="protein sequence ID" value="EAQ91122.1"/>
    <property type="molecule type" value="Genomic_DNA"/>
</dbReference>
<dbReference type="RefSeq" id="XP_001229573.1">
    <property type="nucleotide sequence ID" value="XM_001229572.1"/>
</dbReference>
<dbReference type="SMR" id="Q2H9P7"/>
<dbReference type="FunCoup" id="Q2H9P7">
    <property type="interactions" value="178"/>
</dbReference>
<dbReference type="STRING" id="306901.Q2H9P7"/>
<dbReference type="GeneID" id="4389081"/>
<dbReference type="VEuPathDB" id="FungiDB:CHGG_03057"/>
<dbReference type="eggNOG" id="KOG3846">
    <property type="taxonomic scope" value="Eukaryota"/>
</dbReference>
<dbReference type="HOGENOM" id="CLU_003433_4_0_1"/>
<dbReference type="InParanoid" id="Q2H9P7"/>
<dbReference type="OMA" id="LPGWNSH"/>
<dbReference type="OrthoDB" id="5978656at2759"/>
<dbReference type="UniPathway" id="UPA00253">
    <property type="reaction ID" value="UER00329"/>
</dbReference>
<dbReference type="UniPathway" id="UPA00334">
    <property type="reaction ID" value="UER00455"/>
</dbReference>
<dbReference type="Proteomes" id="UP000001056">
    <property type="component" value="Unassembled WGS sequence"/>
</dbReference>
<dbReference type="GO" id="GO:0005737">
    <property type="term" value="C:cytoplasm"/>
    <property type="evidence" value="ECO:0007669"/>
    <property type="project" value="UniProtKB-SubCell"/>
</dbReference>
<dbReference type="GO" id="GO:0030429">
    <property type="term" value="F:kynureninase activity"/>
    <property type="evidence" value="ECO:0007669"/>
    <property type="project" value="UniProtKB-UniRule"/>
</dbReference>
<dbReference type="GO" id="GO:0030170">
    <property type="term" value="F:pyridoxal phosphate binding"/>
    <property type="evidence" value="ECO:0007669"/>
    <property type="project" value="UniProtKB-UniRule"/>
</dbReference>
<dbReference type="GO" id="GO:0034354">
    <property type="term" value="P:'de novo' NAD biosynthetic process from L-tryptophan"/>
    <property type="evidence" value="ECO:0007669"/>
    <property type="project" value="UniProtKB-UniRule"/>
</dbReference>
<dbReference type="GO" id="GO:0043420">
    <property type="term" value="P:anthranilate metabolic process"/>
    <property type="evidence" value="ECO:0007669"/>
    <property type="project" value="UniProtKB-UniRule"/>
</dbReference>
<dbReference type="GO" id="GO:0097053">
    <property type="term" value="P:L-kynurenine catabolic process"/>
    <property type="evidence" value="ECO:0007669"/>
    <property type="project" value="UniProtKB-UniRule"/>
</dbReference>
<dbReference type="GO" id="GO:0019441">
    <property type="term" value="P:L-tryptophan catabolic process to kynurenine"/>
    <property type="evidence" value="ECO:0007669"/>
    <property type="project" value="TreeGrafter"/>
</dbReference>
<dbReference type="GO" id="GO:0019805">
    <property type="term" value="P:quinolinate biosynthetic process"/>
    <property type="evidence" value="ECO:0007669"/>
    <property type="project" value="UniProtKB-UniRule"/>
</dbReference>
<dbReference type="FunFam" id="3.40.640.10:FF:000031">
    <property type="entry name" value="Kynureninase"/>
    <property type="match status" value="1"/>
</dbReference>
<dbReference type="Gene3D" id="3.90.1150.10">
    <property type="entry name" value="Aspartate Aminotransferase, domain 1"/>
    <property type="match status" value="1"/>
</dbReference>
<dbReference type="Gene3D" id="3.40.640.10">
    <property type="entry name" value="Type I PLP-dependent aspartate aminotransferase-like (Major domain)"/>
    <property type="match status" value="1"/>
</dbReference>
<dbReference type="HAMAP" id="MF_01970">
    <property type="entry name" value="Kynureninase"/>
    <property type="match status" value="1"/>
</dbReference>
<dbReference type="InterPro" id="IPR000192">
    <property type="entry name" value="Aminotrans_V_dom"/>
</dbReference>
<dbReference type="InterPro" id="IPR010111">
    <property type="entry name" value="Kynureninase"/>
</dbReference>
<dbReference type="InterPro" id="IPR015424">
    <property type="entry name" value="PyrdxlP-dep_Trfase"/>
</dbReference>
<dbReference type="InterPro" id="IPR015421">
    <property type="entry name" value="PyrdxlP-dep_Trfase_major"/>
</dbReference>
<dbReference type="InterPro" id="IPR015422">
    <property type="entry name" value="PyrdxlP-dep_Trfase_small"/>
</dbReference>
<dbReference type="NCBIfam" id="TIGR01814">
    <property type="entry name" value="kynureninase"/>
    <property type="match status" value="1"/>
</dbReference>
<dbReference type="PANTHER" id="PTHR14084">
    <property type="entry name" value="KYNURENINASE"/>
    <property type="match status" value="1"/>
</dbReference>
<dbReference type="PANTHER" id="PTHR14084:SF0">
    <property type="entry name" value="KYNURENINASE"/>
    <property type="match status" value="1"/>
</dbReference>
<dbReference type="Pfam" id="PF00266">
    <property type="entry name" value="Aminotran_5"/>
    <property type="match status" value="1"/>
</dbReference>
<dbReference type="Pfam" id="PF22580">
    <property type="entry name" value="KYNU_C"/>
    <property type="match status" value="1"/>
</dbReference>
<dbReference type="PIRSF" id="PIRSF038800">
    <property type="entry name" value="KYNU"/>
    <property type="match status" value="1"/>
</dbReference>
<dbReference type="SUPFAM" id="SSF53383">
    <property type="entry name" value="PLP-dependent transferases"/>
    <property type="match status" value="1"/>
</dbReference>
<proteinExistence type="inferred from homology"/>
<organism>
    <name type="scientific">Chaetomium globosum (strain ATCC 6205 / CBS 148.51 / DSM 1962 / NBRC 6347 / NRRL 1970)</name>
    <name type="common">Soil fungus</name>
    <dbReference type="NCBI Taxonomy" id="306901"/>
    <lineage>
        <taxon>Eukaryota</taxon>
        <taxon>Fungi</taxon>
        <taxon>Dikarya</taxon>
        <taxon>Ascomycota</taxon>
        <taxon>Pezizomycotina</taxon>
        <taxon>Sordariomycetes</taxon>
        <taxon>Sordariomycetidae</taxon>
        <taxon>Sordariales</taxon>
        <taxon>Chaetomiaceae</taxon>
        <taxon>Chaetomium</taxon>
    </lineage>
</organism>
<feature type="chain" id="PRO_0000356974" description="Kynureninase 1">
    <location>
        <begin position="1"/>
        <end position="509"/>
    </location>
</feature>
<feature type="binding site" evidence="1">
    <location>
        <position position="154"/>
    </location>
    <ligand>
        <name>pyridoxal 5'-phosphate</name>
        <dbReference type="ChEBI" id="CHEBI:597326"/>
    </ligand>
</feature>
<feature type="binding site" evidence="1">
    <location>
        <position position="155"/>
    </location>
    <ligand>
        <name>pyridoxal 5'-phosphate</name>
        <dbReference type="ChEBI" id="CHEBI:597326"/>
    </ligand>
</feature>
<feature type="binding site" evidence="1">
    <location>
        <begin position="183"/>
        <end position="186"/>
    </location>
    <ligand>
        <name>pyridoxal 5'-phosphate</name>
        <dbReference type="ChEBI" id="CHEBI:597326"/>
    </ligand>
</feature>
<feature type="binding site" evidence="1">
    <location>
        <position position="270"/>
    </location>
    <ligand>
        <name>pyridoxal 5'-phosphate</name>
        <dbReference type="ChEBI" id="CHEBI:597326"/>
    </ligand>
</feature>
<feature type="binding site" evidence="1">
    <location>
        <position position="273"/>
    </location>
    <ligand>
        <name>pyridoxal 5'-phosphate</name>
        <dbReference type="ChEBI" id="CHEBI:597326"/>
    </ligand>
</feature>
<feature type="binding site" evidence="1">
    <location>
        <position position="295"/>
    </location>
    <ligand>
        <name>pyridoxal 5'-phosphate</name>
        <dbReference type="ChEBI" id="CHEBI:597326"/>
    </ligand>
</feature>
<feature type="binding site" evidence="1">
    <location>
        <position position="345"/>
    </location>
    <ligand>
        <name>pyridoxal 5'-phosphate</name>
        <dbReference type="ChEBI" id="CHEBI:597326"/>
    </ligand>
</feature>
<feature type="binding site" evidence="1">
    <location>
        <position position="373"/>
    </location>
    <ligand>
        <name>pyridoxal 5'-phosphate</name>
        <dbReference type="ChEBI" id="CHEBI:597326"/>
    </ligand>
</feature>
<feature type="modified residue" description="N6-(pyridoxal phosphate)lysine" evidence="1">
    <location>
        <position position="296"/>
    </location>
</feature>
<gene>
    <name evidence="1" type="primary">BNA5-1</name>
    <name type="ORF">CHGG_03057</name>
</gene>
<accession>Q2H9P7</accession>
<keyword id="KW-0963">Cytoplasm</keyword>
<keyword id="KW-0378">Hydrolase</keyword>
<keyword id="KW-0662">Pyridine nucleotide biosynthesis</keyword>
<keyword id="KW-0663">Pyridoxal phosphate</keyword>
<keyword id="KW-1185">Reference proteome</keyword>
<protein>
    <recommendedName>
        <fullName evidence="1">Kynureninase 1</fullName>
        <ecNumber evidence="1">3.7.1.3</ecNumber>
    </recommendedName>
    <alternativeName>
        <fullName evidence="1">Biosynthesis of nicotinic acid protein 5-1</fullName>
    </alternativeName>
    <alternativeName>
        <fullName evidence="1">L-kynurenine hydrolase 1</fullName>
    </alternativeName>
</protein>
<name>KYNU1_CHAGB</name>
<comment type="function">
    <text evidence="1">Catalyzes the cleavage of L-kynurenine (L-Kyn) and L-3-hydroxykynurenine (L-3OHKyn) into anthranilic acid (AA) and 3-hydroxyanthranilic acid (3-OHAA), respectively.</text>
</comment>
<comment type="catalytic activity">
    <reaction evidence="1">
        <text>L-kynurenine + H2O = anthranilate + L-alanine + H(+)</text>
        <dbReference type="Rhea" id="RHEA:16813"/>
        <dbReference type="ChEBI" id="CHEBI:15377"/>
        <dbReference type="ChEBI" id="CHEBI:15378"/>
        <dbReference type="ChEBI" id="CHEBI:16567"/>
        <dbReference type="ChEBI" id="CHEBI:57959"/>
        <dbReference type="ChEBI" id="CHEBI:57972"/>
        <dbReference type="EC" id="3.7.1.3"/>
    </reaction>
</comment>
<comment type="catalytic activity">
    <reaction evidence="1">
        <text>3-hydroxy-L-kynurenine + H2O = 3-hydroxyanthranilate + L-alanine + H(+)</text>
        <dbReference type="Rhea" id="RHEA:25143"/>
        <dbReference type="ChEBI" id="CHEBI:15377"/>
        <dbReference type="ChEBI" id="CHEBI:15378"/>
        <dbReference type="ChEBI" id="CHEBI:36559"/>
        <dbReference type="ChEBI" id="CHEBI:57972"/>
        <dbReference type="ChEBI" id="CHEBI:58125"/>
        <dbReference type="EC" id="3.7.1.3"/>
    </reaction>
</comment>
<comment type="cofactor">
    <cofactor evidence="1">
        <name>pyridoxal 5'-phosphate</name>
        <dbReference type="ChEBI" id="CHEBI:597326"/>
    </cofactor>
</comment>
<comment type="pathway">
    <text evidence="1">Amino-acid degradation; L-kynurenine degradation; L-alanine and anthranilate from L-kynurenine: step 1/1.</text>
</comment>
<comment type="pathway">
    <text evidence="1">Cofactor biosynthesis; NAD(+) biosynthesis; quinolinate from L-kynurenine: step 2/3.</text>
</comment>
<comment type="subunit">
    <text evidence="1">Homodimer.</text>
</comment>
<comment type="subcellular location">
    <subcellularLocation>
        <location evidence="1">Cytoplasm</location>
    </subcellularLocation>
</comment>
<comment type="similarity">
    <text evidence="1">Belongs to the kynureninase family.</text>
</comment>
<reference key="1">
    <citation type="journal article" date="2015" name="Genome Announc.">
        <title>Draft genome sequence of the cellulolytic fungus Chaetomium globosum.</title>
        <authorList>
            <person name="Cuomo C.A."/>
            <person name="Untereiner W.A."/>
            <person name="Ma L.-J."/>
            <person name="Grabherr M."/>
            <person name="Birren B.W."/>
        </authorList>
    </citation>
    <scope>NUCLEOTIDE SEQUENCE [LARGE SCALE GENOMIC DNA]</scope>
    <source>
        <strain>ATCC 6205 / CBS 148.51 / DSM 1962 / NBRC 6347 / NRRL 1970</strain>
    </source>
</reference>
<evidence type="ECO:0000255" key="1">
    <source>
        <dbReference type="HAMAP-Rule" id="MF_03017"/>
    </source>
</evidence>
<sequence length="509" mass="55240">MSEILKSPIQSPLLRGFVTSRRCDASEIEDLGSNVTKGLRVAGGRRVLRSHFFSYCLTYPAVNVAATTETGSGDGATEKCVYLCGNSLGLQPKRTQTRVNQYLSTWGTQGVQGHFKPLEESPLPTWLDADDRAAQLIAPIVGASKAEVAVMQTLTANLHLLMSAFYKPDINGKHKIILESKAFPSDHFAVETQLRHHNLDPATSMITLTSPSSPEDNILTTAEILSAITTHAATTALILLPGIQYYTGQLLDIPTITAHARTHSVFLIWDLAHAVGNAPLHLHDWGVDAAAWCSYKYLNGGPGCIGGLFVHERNSAVPPPVGELEVQQKEGEWEREGYANRLAGWWGNDKRTRFAMVNRFRPVPGAAGFQLSNPSILDITSLTASLEVFAEAGGVGALRGKSLRLTAFLEELLVGEGSSIVGVEERALFRVITPSDPGQRGAQLSLMLRGGLLEAVMRELEKRAVIVDERKPDVIRVAPAPLYNSFEDCVRFVVAFGEALAVARKEVAV</sequence>